<keyword id="KW-0067">ATP-binding</keyword>
<keyword id="KW-0317">Glutathione biosynthesis</keyword>
<keyword id="KW-0436">Ligase</keyword>
<keyword id="KW-0547">Nucleotide-binding</keyword>
<protein>
    <recommendedName>
        <fullName evidence="1">Glutamate--cysteine ligase</fullName>
        <ecNumber evidence="1">6.3.2.2</ecNumber>
    </recommendedName>
    <alternativeName>
        <fullName evidence="1">Gamma-ECS</fullName>
        <shortName evidence="1">GCS</shortName>
    </alternativeName>
    <alternativeName>
        <fullName evidence="1">Gamma-glutamylcysteine synthetase</fullName>
    </alternativeName>
</protein>
<proteinExistence type="inferred from homology"/>
<feature type="chain" id="PRO_0000192528" description="Glutamate--cysteine ligase">
    <location>
        <begin position="1"/>
        <end position="520"/>
    </location>
</feature>
<comment type="catalytic activity">
    <reaction evidence="1">
        <text>L-cysteine + L-glutamate + ATP = gamma-L-glutamyl-L-cysteine + ADP + phosphate + H(+)</text>
        <dbReference type="Rhea" id="RHEA:13285"/>
        <dbReference type="ChEBI" id="CHEBI:15378"/>
        <dbReference type="ChEBI" id="CHEBI:29985"/>
        <dbReference type="ChEBI" id="CHEBI:30616"/>
        <dbReference type="ChEBI" id="CHEBI:35235"/>
        <dbReference type="ChEBI" id="CHEBI:43474"/>
        <dbReference type="ChEBI" id="CHEBI:58173"/>
        <dbReference type="ChEBI" id="CHEBI:456216"/>
        <dbReference type="EC" id="6.3.2.2"/>
    </reaction>
</comment>
<comment type="pathway">
    <text evidence="1">Sulfur metabolism; glutathione biosynthesis; glutathione from L-cysteine and L-glutamate: step 1/2.</text>
</comment>
<comment type="similarity">
    <text evidence="1">Belongs to the glutamate--cysteine ligase type 1 family. Type 1 subfamily.</text>
</comment>
<gene>
    <name evidence="1" type="primary">gshA</name>
    <name type="ordered locus">LIC_11812</name>
</gene>
<evidence type="ECO:0000255" key="1">
    <source>
        <dbReference type="HAMAP-Rule" id="MF_00578"/>
    </source>
</evidence>
<sequence>MKTKELTQSKIEEVSLEILLRHAVKAKHGLEKESMRVNPDGTLSGTTHPIHLGSSLTNHYIKTDFAEPQLEYATHPRPKVEANIRELQDLHIFTIRKLENELIWPFSMPPVLPEEENEIPLGQYGTSHSGRWKTIYRHGLGLRYGRRMQTISGVHYNFSFSKVFLRQFLGKEISNFTKEEISSLYLHVIRNFLRRVHFLTYLTGSSPVFDFTFLPNPGSLKFEKHKNFTLYSTYATSLRMSEIGYTSKVQDTLGIHYNSLEEYVDRMCYAVHTPYPKYVSFSENKDAQLNPNYLQIENEFYSPIRPKQIPKGDERPLDALLQRGIEYIEIRSLDIDPYSPVGVCRSNLAFTQLILLDSLLKVSPSISEEENFSLKENLNSVIWEGRNPELKINVNGSKRNFQEAGAEYSESLRHYAKILDLHTGRRTYQEAIDFQIKKWKNPDKTPSGKLLSEILKRNIEFREKGIELAQENKRMFSYLEYSPGTLMKMEKETIRSFQEKEELEKQEIQTQYPTVKLCNH</sequence>
<dbReference type="EC" id="6.3.2.2" evidence="1"/>
<dbReference type="EMBL" id="AE016823">
    <property type="protein sequence ID" value="AAS70400.1"/>
    <property type="molecule type" value="Genomic_DNA"/>
</dbReference>
<dbReference type="RefSeq" id="WP_000849962.1">
    <property type="nucleotide sequence ID" value="NC_005823.1"/>
</dbReference>
<dbReference type="SMR" id="Q72RD4"/>
<dbReference type="GeneID" id="61141708"/>
<dbReference type="KEGG" id="lic:LIC_11812"/>
<dbReference type="HOGENOM" id="CLU_020728_3_0_12"/>
<dbReference type="UniPathway" id="UPA00142">
    <property type="reaction ID" value="UER00209"/>
</dbReference>
<dbReference type="Proteomes" id="UP000007037">
    <property type="component" value="Chromosome I"/>
</dbReference>
<dbReference type="GO" id="GO:0005829">
    <property type="term" value="C:cytosol"/>
    <property type="evidence" value="ECO:0007669"/>
    <property type="project" value="TreeGrafter"/>
</dbReference>
<dbReference type="GO" id="GO:0005524">
    <property type="term" value="F:ATP binding"/>
    <property type="evidence" value="ECO:0007669"/>
    <property type="project" value="UniProtKB-KW"/>
</dbReference>
<dbReference type="GO" id="GO:0004357">
    <property type="term" value="F:glutamate-cysteine ligase activity"/>
    <property type="evidence" value="ECO:0007669"/>
    <property type="project" value="UniProtKB-UniRule"/>
</dbReference>
<dbReference type="GO" id="GO:0046872">
    <property type="term" value="F:metal ion binding"/>
    <property type="evidence" value="ECO:0007669"/>
    <property type="project" value="TreeGrafter"/>
</dbReference>
<dbReference type="GO" id="GO:0006750">
    <property type="term" value="P:glutathione biosynthetic process"/>
    <property type="evidence" value="ECO:0007669"/>
    <property type="project" value="UniProtKB-UniRule"/>
</dbReference>
<dbReference type="FunFam" id="3.30.590.20:FF:000005">
    <property type="entry name" value="Glutamate--cysteine ligase"/>
    <property type="match status" value="1"/>
</dbReference>
<dbReference type="Gene3D" id="3.30.590.20">
    <property type="match status" value="1"/>
</dbReference>
<dbReference type="HAMAP" id="MF_00578">
    <property type="entry name" value="Glu_cys_ligase"/>
    <property type="match status" value="1"/>
</dbReference>
<dbReference type="InterPro" id="IPR014746">
    <property type="entry name" value="Gln_synth/guanido_kin_cat_dom"/>
</dbReference>
<dbReference type="InterPro" id="IPR007370">
    <property type="entry name" value="Glu_cys_ligase"/>
</dbReference>
<dbReference type="InterPro" id="IPR006334">
    <property type="entry name" value="Glut_cys_ligase"/>
</dbReference>
<dbReference type="NCBIfam" id="TIGR01434">
    <property type="entry name" value="glu_cys_ligase"/>
    <property type="match status" value="1"/>
</dbReference>
<dbReference type="PANTHER" id="PTHR38761">
    <property type="entry name" value="GLUTAMATE--CYSTEINE LIGASE"/>
    <property type="match status" value="1"/>
</dbReference>
<dbReference type="PANTHER" id="PTHR38761:SF1">
    <property type="entry name" value="GLUTAMATE--CYSTEINE LIGASE"/>
    <property type="match status" value="1"/>
</dbReference>
<dbReference type="Pfam" id="PF04262">
    <property type="entry name" value="Glu_cys_ligase"/>
    <property type="match status" value="1"/>
</dbReference>
<dbReference type="SUPFAM" id="SSF55931">
    <property type="entry name" value="Glutamine synthetase/guanido kinase"/>
    <property type="match status" value="1"/>
</dbReference>
<reference key="1">
    <citation type="journal article" date="2004" name="J. Bacteriol.">
        <title>Comparative genomics of two Leptospira interrogans serovars reveals novel insights into physiology and pathogenesis.</title>
        <authorList>
            <person name="Nascimento A.L.T.O."/>
            <person name="Ko A.I."/>
            <person name="Martins E.A.L."/>
            <person name="Monteiro-Vitorello C.B."/>
            <person name="Ho P.L."/>
            <person name="Haake D.A."/>
            <person name="Verjovski-Almeida S."/>
            <person name="Hartskeerl R.A."/>
            <person name="Marques M.V."/>
            <person name="Oliveira M.C."/>
            <person name="Menck C.F.M."/>
            <person name="Leite L.C.C."/>
            <person name="Carrer H."/>
            <person name="Coutinho L.L."/>
            <person name="Degrave W.M."/>
            <person name="Dellagostin O.A."/>
            <person name="El-Dorry H."/>
            <person name="Ferro E.S."/>
            <person name="Ferro M.I.T."/>
            <person name="Furlan L.R."/>
            <person name="Gamberini M."/>
            <person name="Giglioti E.A."/>
            <person name="Goes-Neto A."/>
            <person name="Goldman G.H."/>
            <person name="Goldman M.H.S."/>
            <person name="Harakava R."/>
            <person name="Jeronimo S.M.B."/>
            <person name="Junqueira-de-Azevedo I.L.M."/>
            <person name="Kimura E.T."/>
            <person name="Kuramae E.E."/>
            <person name="Lemos E.G.M."/>
            <person name="Lemos M.V.F."/>
            <person name="Marino C.L."/>
            <person name="Nunes L.R."/>
            <person name="de Oliveira R.C."/>
            <person name="Pereira G.G."/>
            <person name="Reis M.S."/>
            <person name="Schriefer A."/>
            <person name="Siqueira W.J."/>
            <person name="Sommer P."/>
            <person name="Tsai S.M."/>
            <person name="Simpson A.J.G."/>
            <person name="Ferro J.A."/>
            <person name="Camargo L.E.A."/>
            <person name="Kitajima J.P."/>
            <person name="Setubal J.C."/>
            <person name="Van Sluys M.A."/>
        </authorList>
    </citation>
    <scope>NUCLEOTIDE SEQUENCE [LARGE SCALE GENOMIC DNA]</scope>
    <source>
        <strain>Fiocruz L1-130</strain>
    </source>
</reference>
<name>GSH1_LEPIC</name>
<organism>
    <name type="scientific">Leptospira interrogans serogroup Icterohaemorrhagiae serovar copenhageni (strain Fiocruz L1-130)</name>
    <dbReference type="NCBI Taxonomy" id="267671"/>
    <lineage>
        <taxon>Bacteria</taxon>
        <taxon>Pseudomonadati</taxon>
        <taxon>Spirochaetota</taxon>
        <taxon>Spirochaetia</taxon>
        <taxon>Leptospirales</taxon>
        <taxon>Leptospiraceae</taxon>
        <taxon>Leptospira</taxon>
    </lineage>
</organism>
<accession>Q72RD4</accession>